<proteinExistence type="inferred from homology"/>
<evidence type="ECO:0000255" key="1">
    <source>
        <dbReference type="HAMAP-Rule" id="MF_00061"/>
    </source>
</evidence>
<comment type="function">
    <text evidence="1">Catalyzes the phosphorylation of the position 2 hydroxy group of 4-diphosphocytidyl-2C-methyl-D-erythritol.</text>
</comment>
<comment type="catalytic activity">
    <reaction evidence="1">
        <text>4-CDP-2-C-methyl-D-erythritol + ATP = 4-CDP-2-C-methyl-D-erythritol 2-phosphate + ADP + H(+)</text>
        <dbReference type="Rhea" id="RHEA:18437"/>
        <dbReference type="ChEBI" id="CHEBI:15378"/>
        <dbReference type="ChEBI" id="CHEBI:30616"/>
        <dbReference type="ChEBI" id="CHEBI:57823"/>
        <dbReference type="ChEBI" id="CHEBI:57919"/>
        <dbReference type="ChEBI" id="CHEBI:456216"/>
        <dbReference type="EC" id="2.7.1.148"/>
    </reaction>
</comment>
<comment type="pathway">
    <text evidence="1">Isoprenoid biosynthesis; isopentenyl diphosphate biosynthesis via DXP pathway; isopentenyl diphosphate from 1-deoxy-D-xylulose 5-phosphate: step 3/6.</text>
</comment>
<comment type="subunit">
    <text evidence="1">Homodimer.</text>
</comment>
<comment type="similarity">
    <text evidence="1">Belongs to the GHMP kinase family. IspE subfamily.</text>
</comment>
<accession>B4TKA8</accession>
<reference key="1">
    <citation type="journal article" date="2011" name="J. Bacteriol.">
        <title>Comparative genomics of 28 Salmonella enterica isolates: evidence for CRISPR-mediated adaptive sublineage evolution.</title>
        <authorList>
            <person name="Fricke W.F."/>
            <person name="Mammel M.K."/>
            <person name="McDermott P.F."/>
            <person name="Tartera C."/>
            <person name="White D.G."/>
            <person name="Leclerc J.E."/>
            <person name="Ravel J."/>
            <person name="Cebula T.A."/>
        </authorList>
    </citation>
    <scope>NUCLEOTIDE SEQUENCE [LARGE SCALE GENOMIC DNA]</scope>
    <source>
        <strain>SL476</strain>
    </source>
</reference>
<gene>
    <name evidence="1" type="primary">ispE</name>
    <name type="ordered locus">SeHA_C1975</name>
</gene>
<feature type="chain" id="PRO_1000092113" description="4-diphosphocytidyl-2-C-methyl-D-erythritol kinase">
    <location>
        <begin position="1"/>
        <end position="282"/>
    </location>
</feature>
<feature type="active site" evidence="1">
    <location>
        <position position="9"/>
    </location>
</feature>
<feature type="active site" evidence="1">
    <location>
        <position position="140"/>
    </location>
</feature>
<feature type="binding site" evidence="1">
    <location>
        <begin position="98"/>
        <end position="108"/>
    </location>
    <ligand>
        <name>ATP</name>
        <dbReference type="ChEBI" id="CHEBI:30616"/>
    </ligand>
</feature>
<dbReference type="EC" id="2.7.1.148" evidence="1"/>
<dbReference type="EMBL" id="CP001120">
    <property type="protein sequence ID" value="ACF68345.1"/>
    <property type="molecule type" value="Genomic_DNA"/>
</dbReference>
<dbReference type="SMR" id="B4TKA8"/>
<dbReference type="KEGG" id="seh:SeHA_C1975"/>
<dbReference type="HOGENOM" id="CLU_053057_3_0_6"/>
<dbReference type="UniPathway" id="UPA00056">
    <property type="reaction ID" value="UER00094"/>
</dbReference>
<dbReference type="Proteomes" id="UP000001866">
    <property type="component" value="Chromosome"/>
</dbReference>
<dbReference type="GO" id="GO:0050515">
    <property type="term" value="F:4-(cytidine 5'-diphospho)-2-C-methyl-D-erythritol kinase activity"/>
    <property type="evidence" value="ECO:0007669"/>
    <property type="project" value="UniProtKB-UniRule"/>
</dbReference>
<dbReference type="GO" id="GO:0005524">
    <property type="term" value="F:ATP binding"/>
    <property type="evidence" value="ECO:0007669"/>
    <property type="project" value="UniProtKB-UniRule"/>
</dbReference>
<dbReference type="GO" id="GO:0019288">
    <property type="term" value="P:isopentenyl diphosphate biosynthetic process, methylerythritol 4-phosphate pathway"/>
    <property type="evidence" value="ECO:0007669"/>
    <property type="project" value="UniProtKB-UniRule"/>
</dbReference>
<dbReference type="GO" id="GO:0016114">
    <property type="term" value="P:terpenoid biosynthetic process"/>
    <property type="evidence" value="ECO:0007669"/>
    <property type="project" value="InterPro"/>
</dbReference>
<dbReference type="FunFam" id="3.30.230.10:FF:000022">
    <property type="entry name" value="4-diphosphocytidyl-2-C-methyl-D-erythritol kinase"/>
    <property type="match status" value="1"/>
</dbReference>
<dbReference type="FunFam" id="3.30.70.890:FF:000004">
    <property type="entry name" value="4-diphosphocytidyl-2-C-methyl-D-erythritol kinase"/>
    <property type="match status" value="1"/>
</dbReference>
<dbReference type="Gene3D" id="3.30.230.10">
    <property type="match status" value="1"/>
</dbReference>
<dbReference type="Gene3D" id="3.30.70.890">
    <property type="entry name" value="GHMP kinase, C-terminal domain"/>
    <property type="match status" value="1"/>
</dbReference>
<dbReference type="HAMAP" id="MF_00061">
    <property type="entry name" value="IspE"/>
    <property type="match status" value="1"/>
</dbReference>
<dbReference type="InterPro" id="IPR013750">
    <property type="entry name" value="GHMP_kinase_C_dom"/>
</dbReference>
<dbReference type="InterPro" id="IPR036554">
    <property type="entry name" value="GHMP_kinase_C_sf"/>
</dbReference>
<dbReference type="InterPro" id="IPR006204">
    <property type="entry name" value="GHMP_kinase_N_dom"/>
</dbReference>
<dbReference type="InterPro" id="IPR004424">
    <property type="entry name" value="IspE"/>
</dbReference>
<dbReference type="InterPro" id="IPR020568">
    <property type="entry name" value="Ribosomal_Su5_D2-typ_SF"/>
</dbReference>
<dbReference type="InterPro" id="IPR014721">
    <property type="entry name" value="Ribsml_uS5_D2-typ_fold_subgr"/>
</dbReference>
<dbReference type="NCBIfam" id="TIGR00154">
    <property type="entry name" value="ispE"/>
    <property type="match status" value="1"/>
</dbReference>
<dbReference type="PANTHER" id="PTHR43527">
    <property type="entry name" value="4-DIPHOSPHOCYTIDYL-2-C-METHYL-D-ERYTHRITOL KINASE, CHLOROPLASTIC"/>
    <property type="match status" value="1"/>
</dbReference>
<dbReference type="PANTHER" id="PTHR43527:SF2">
    <property type="entry name" value="4-DIPHOSPHOCYTIDYL-2-C-METHYL-D-ERYTHRITOL KINASE, CHLOROPLASTIC"/>
    <property type="match status" value="1"/>
</dbReference>
<dbReference type="Pfam" id="PF08544">
    <property type="entry name" value="GHMP_kinases_C"/>
    <property type="match status" value="1"/>
</dbReference>
<dbReference type="Pfam" id="PF00288">
    <property type="entry name" value="GHMP_kinases_N"/>
    <property type="match status" value="1"/>
</dbReference>
<dbReference type="PIRSF" id="PIRSF010376">
    <property type="entry name" value="IspE"/>
    <property type="match status" value="1"/>
</dbReference>
<dbReference type="SUPFAM" id="SSF55060">
    <property type="entry name" value="GHMP Kinase, C-terminal domain"/>
    <property type="match status" value="1"/>
</dbReference>
<dbReference type="SUPFAM" id="SSF54211">
    <property type="entry name" value="Ribosomal protein S5 domain 2-like"/>
    <property type="match status" value="1"/>
</dbReference>
<organism>
    <name type="scientific">Salmonella heidelberg (strain SL476)</name>
    <dbReference type="NCBI Taxonomy" id="454169"/>
    <lineage>
        <taxon>Bacteria</taxon>
        <taxon>Pseudomonadati</taxon>
        <taxon>Pseudomonadota</taxon>
        <taxon>Gammaproteobacteria</taxon>
        <taxon>Enterobacterales</taxon>
        <taxon>Enterobacteriaceae</taxon>
        <taxon>Salmonella</taxon>
    </lineage>
</organism>
<protein>
    <recommendedName>
        <fullName evidence="1">4-diphosphocytidyl-2-C-methyl-D-erythritol kinase</fullName>
        <shortName evidence="1">CMK</shortName>
        <ecNumber evidence="1">2.7.1.148</ecNumber>
    </recommendedName>
    <alternativeName>
        <fullName evidence="1">4-(cytidine-5'-diphospho)-2-C-methyl-D-erythritol kinase</fullName>
    </alternativeName>
</protein>
<name>ISPE_SALHS</name>
<sequence length="282" mass="30785">MTHWPSPAKLNLFLYITGQRADGYHTLQTLFQFLDYGDTLHIEPRRDGEIHLLTPVNGVENEDNLIVRAARLLMKIASESGRLPAGSGADISIEKRLPMGGGLGGGSSNAATVLVALNHLWQCGLSIDELATLGLTLGADVPVFVRGHAAFAEGVGEILTPVNPPEKWYLVAHPGVSIPTPVIFKDPQLPRNTPKRSIDTLLKCEFSNDCEVIARKRFREVDAALSWLLEYAPSRLTGTGACVFAEFDTESCARQVLEQAPEWLNAFVAKGVNLSPLHRELL</sequence>
<keyword id="KW-0067">ATP-binding</keyword>
<keyword id="KW-0414">Isoprene biosynthesis</keyword>
<keyword id="KW-0418">Kinase</keyword>
<keyword id="KW-0547">Nucleotide-binding</keyword>
<keyword id="KW-0808">Transferase</keyword>